<evidence type="ECO:0000255" key="1">
    <source>
        <dbReference type="HAMAP-Rule" id="MF_00135"/>
    </source>
</evidence>
<protein>
    <recommendedName>
        <fullName evidence="1">N-(5'-phosphoribosyl)anthranilate isomerase</fullName>
        <shortName evidence="1">PRAI</shortName>
        <ecNumber evidence="1">5.3.1.24</ecNumber>
    </recommendedName>
</protein>
<sequence>MVKVKICGLITQEDAMLACQYGADLLGFNFYEKSPRYISPAKAAEIIKTLPSNVASVGVFVGKEANEINQICEEAMIDIAQIHDESLCAKDFTKLRPKIIKAFRVQNTFDTREIRRFYEQTGVNTFIFDAFQKDLYGGTGKRLDVELAHKVFKEIEGFGYGFLAGGLNEKNVETTVRLLKPYGVDVASGIESEPGKKAHDKMALFIREAKKSLCLEPGY</sequence>
<name>TRPF_CHLT3</name>
<organism>
    <name type="scientific">Chloroherpeton thalassium (strain ATCC 35110 / GB-78)</name>
    <dbReference type="NCBI Taxonomy" id="517418"/>
    <lineage>
        <taxon>Bacteria</taxon>
        <taxon>Pseudomonadati</taxon>
        <taxon>Chlorobiota</taxon>
        <taxon>Chlorobiia</taxon>
        <taxon>Chlorobiales</taxon>
        <taxon>Chloroherpetonaceae</taxon>
        <taxon>Chloroherpeton</taxon>
    </lineage>
</organism>
<gene>
    <name evidence="1" type="primary">trpF</name>
    <name type="ordered locus">Ctha_1530</name>
</gene>
<proteinExistence type="inferred from homology"/>
<keyword id="KW-0028">Amino-acid biosynthesis</keyword>
<keyword id="KW-0057">Aromatic amino acid biosynthesis</keyword>
<keyword id="KW-0413">Isomerase</keyword>
<keyword id="KW-1185">Reference proteome</keyword>
<keyword id="KW-0822">Tryptophan biosynthesis</keyword>
<feature type="chain" id="PRO_1000197091" description="N-(5'-phosphoribosyl)anthranilate isomerase">
    <location>
        <begin position="1"/>
        <end position="219"/>
    </location>
</feature>
<reference key="1">
    <citation type="submission" date="2008-06" db="EMBL/GenBank/DDBJ databases">
        <title>Complete sequence of Chloroherpeton thalassium ATCC 35110.</title>
        <authorList>
            <consortium name="US DOE Joint Genome Institute"/>
            <person name="Lucas S."/>
            <person name="Copeland A."/>
            <person name="Lapidus A."/>
            <person name="Glavina del Rio T."/>
            <person name="Dalin E."/>
            <person name="Tice H."/>
            <person name="Bruce D."/>
            <person name="Goodwin L."/>
            <person name="Pitluck S."/>
            <person name="Schmutz J."/>
            <person name="Larimer F."/>
            <person name="Land M."/>
            <person name="Hauser L."/>
            <person name="Kyrpides N."/>
            <person name="Mikhailova N."/>
            <person name="Liu Z."/>
            <person name="Li T."/>
            <person name="Zhao F."/>
            <person name="Overmann J."/>
            <person name="Bryant D.A."/>
            <person name="Richardson P."/>
        </authorList>
    </citation>
    <scope>NUCLEOTIDE SEQUENCE [LARGE SCALE GENOMIC DNA]</scope>
    <source>
        <strain>ATCC 35110 / GB-78</strain>
    </source>
</reference>
<comment type="catalytic activity">
    <reaction evidence="1">
        <text>N-(5-phospho-beta-D-ribosyl)anthranilate = 1-(2-carboxyphenylamino)-1-deoxy-D-ribulose 5-phosphate</text>
        <dbReference type="Rhea" id="RHEA:21540"/>
        <dbReference type="ChEBI" id="CHEBI:18277"/>
        <dbReference type="ChEBI" id="CHEBI:58613"/>
        <dbReference type="EC" id="5.3.1.24"/>
    </reaction>
</comment>
<comment type="pathway">
    <text evidence="1">Amino-acid biosynthesis; L-tryptophan biosynthesis; L-tryptophan from chorismate: step 3/5.</text>
</comment>
<comment type="similarity">
    <text evidence="1">Belongs to the TrpF family.</text>
</comment>
<accession>B3QS44</accession>
<dbReference type="EC" id="5.3.1.24" evidence="1"/>
<dbReference type="EMBL" id="CP001100">
    <property type="protein sequence ID" value="ACF13989.1"/>
    <property type="molecule type" value="Genomic_DNA"/>
</dbReference>
<dbReference type="RefSeq" id="WP_012500073.1">
    <property type="nucleotide sequence ID" value="NC_011026.1"/>
</dbReference>
<dbReference type="SMR" id="B3QS44"/>
<dbReference type="STRING" id="517418.Ctha_1530"/>
<dbReference type="KEGG" id="cts:Ctha_1530"/>
<dbReference type="eggNOG" id="COG0135">
    <property type="taxonomic scope" value="Bacteria"/>
</dbReference>
<dbReference type="HOGENOM" id="CLU_076364_2_0_10"/>
<dbReference type="OrthoDB" id="9786954at2"/>
<dbReference type="UniPathway" id="UPA00035">
    <property type="reaction ID" value="UER00042"/>
</dbReference>
<dbReference type="Proteomes" id="UP000001208">
    <property type="component" value="Chromosome"/>
</dbReference>
<dbReference type="GO" id="GO:0004640">
    <property type="term" value="F:phosphoribosylanthranilate isomerase activity"/>
    <property type="evidence" value="ECO:0007669"/>
    <property type="project" value="UniProtKB-UniRule"/>
</dbReference>
<dbReference type="GO" id="GO:0000162">
    <property type="term" value="P:L-tryptophan biosynthetic process"/>
    <property type="evidence" value="ECO:0007669"/>
    <property type="project" value="UniProtKB-UniRule"/>
</dbReference>
<dbReference type="CDD" id="cd00405">
    <property type="entry name" value="PRAI"/>
    <property type="match status" value="1"/>
</dbReference>
<dbReference type="Gene3D" id="3.20.20.70">
    <property type="entry name" value="Aldolase class I"/>
    <property type="match status" value="1"/>
</dbReference>
<dbReference type="HAMAP" id="MF_00135">
    <property type="entry name" value="PRAI"/>
    <property type="match status" value="1"/>
</dbReference>
<dbReference type="InterPro" id="IPR013785">
    <property type="entry name" value="Aldolase_TIM"/>
</dbReference>
<dbReference type="InterPro" id="IPR001240">
    <property type="entry name" value="PRAI_dom"/>
</dbReference>
<dbReference type="InterPro" id="IPR011060">
    <property type="entry name" value="RibuloseP-bd_barrel"/>
</dbReference>
<dbReference type="InterPro" id="IPR044643">
    <property type="entry name" value="TrpF_fam"/>
</dbReference>
<dbReference type="PANTHER" id="PTHR42894">
    <property type="entry name" value="N-(5'-PHOSPHORIBOSYL)ANTHRANILATE ISOMERASE"/>
    <property type="match status" value="1"/>
</dbReference>
<dbReference type="PANTHER" id="PTHR42894:SF1">
    <property type="entry name" value="N-(5'-PHOSPHORIBOSYL)ANTHRANILATE ISOMERASE"/>
    <property type="match status" value="1"/>
</dbReference>
<dbReference type="Pfam" id="PF00697">
    <property type="entry name" value="PRAI"/>
    <property type="match status" value="1"/>
</dbReference>
<dbReference type="SUPFAM" id="SSF51366">
    <property type="entry name" value="Ribulose-phoshate binding barrel"/>
    <property type="match status" value="1"/>
</dbReference>